<keyword id="KW-0028">Amino-acid biosynthesis</keyword>
<keyword id="KW-0057">Aromatic amino acid biosynthesis</keyword>
<keyword id="KW-0963">Cytoplasm</keyword>
<keyword id="KW-1185">Reference proteome</keyword>
<keyword id="KW-0808">Transferase</keyword>
<proteinExistence type="inferred from homology"/>
<feature type="chain" id="PRO_1000099690" description="3-phosphoshikimate 1-carboxyvinyltransferase">
    <location>
        <begin position="1"/>
        <end position="435"/>
    </location>
</feature>
<feature type="active site" description="Proton acceptor" evidence="1">
    <location>
        <position position="313"/>
    </location>
</feature>
<feature type="binding site" evidence="1">
    <location>
        <position position="21"/>
    </location>
    <ligand>
        <name>3-phosphoshikimate</name>
        <dbReference type="ChEBI" id="CHEBI:145989"/>
    </ligand>
</feature>
<feature type="binding site" evidence="1">
    <location>
        <position position="21"/>
    </location>
    <ligand>
        <name>phosphoenolpyruvate</name>
        <dbReference type="ChEBI" id="CHEBI:58702"/>
    </ligand>
</feature>
<feature type="binding site" evidence="1">
    <location>
        <position position="22"/>
    </location>
    <ligand>
        <name>3-phosphoshikimate</name>
        <dbReference type="ChEBI" id="CHEBI:145989"/>
    </ligand>
</feature>
<feature type="binding site" evidence="1">
    <location>
        <position position="26"/>
    </location>
    <ligand>
        <name>3-phosphoshikimate</name>
        <dbReference type="ChEBI" id="CHEBI:145989"/>
    </ligand>
</feature>
<feature type="binding site" evidence="1">
    <location>
        <position position="100"/>
    </location>
    <ligand>
        <name>phosphoenolpyruvate</name>
        <dbReference type="ChEBI" id="CHEBI:58702"/>
    </ligand>
</feature>
<feature type="binding site" evidence="1">
    <location>
        <position position="128"/>
    </location>
    <ligand>
        <name>phosphoenolpyruvate</name>
        <dbReference type="ChEBI" id="CHEBI:58702"/>
    </ligand>
</feature>
<feature type="binding site" evidence="1">
    <location>
        <position position="171"/>
    </location>
    <ligand>
        <name>3-phosphoshikimate</name>
        <dbReference type="ChEBI" id="CHEBI:145989"/>
    </ligand>
</feature>
<feature type="binding site" evidence="1">
    <location>
        <position position="172"/>
    </location>
    <ligand>
        <name>3-phosphoshikimate</name>
        <dbReference type="ChEBI" id="CHEBI:145989"/>
    </ligand>
</feature>
<feature type="binding site" evidence="1">
    <location>
        <position position="173"/>
    </location>
    <ligand>
        <name>3-phosphoshikimate</name>
        <dbReference type="ChEBI" id="CHEBI:145989"/>
    </ligand>
</feature>
<feature type="binding site" evidence="1">
    <location>
        <position position="173"/>
    </location>
    <ligand>
        <name>phosphoenolpyruvate</name>
        <dbReference type="ChEBI" id="CHEBI:58702"/>
    </ligand>
</feature>
<feature type="binding site" evidence="1">
    <location>
        <position position="199"/>
    </location>
    <ligand>
        <name>3-phosphoshikimate</name>
        <dbReference type="ChEBI" id="CHEBI:145989"/>
    </ligand>
</feature>
<feature type="binding site" evidence="1">
    <location>
        <position position="313"/>
    </location>
    <ligand>
        <name>3-phosphoshikimate</name>
        <dbReference type="ChEBI" id="CHEBI:145989"/>
    </ligand>
</feature>
<feature type="binding site" evidence="1">
    <location>
        <position position="340"/>
    </location>
    <ligand>
        <name>3-phosphoshikimate</name>
        <dbReference type="ChEBI" id="CHEBI:145989"/>
    </ligand>
</feature>
<feature type="binding site" evidence="1">
    <location>
        <position position="344"/>
    </location>
    <ligand>
        <name>phosphoenolpyruvate</name>
        <dbReference type="ChEBI" id="CHEBI:58702"/>
    </ligand>
</feature>
<feature type="binding site" evidence="1">
    <location>
        <position position="386"/>
    </location>
    <ligand>
        <name>phosphoenolpyruvate</name>
        <dbReference type="ChEBI" id="CHEBI:58702"/>
    </ligand>
</feature>
<feature type="binding site" evidence="1">
    <location>
        <position position="412"/>
    </location>
    <ligand>
        <name>phosphoenolpyruvate</name>
        <dbReference type="ChEBI" id="CHEBI:58702"/>
    </ligand>
</feature>
<gene>
    <name evidence="1" type="primary">aroA</name>
    <name type="ordered locus">NT01CX_0624</name>
</gene>
<name>AROA_CLONN</name>
<dbReference type="EC" id="2.5.1.19" evidence="1"/>
<dbReference type="EMBL" id="CP000382">
    <property type="protein sequence ID" value="ABK62560.1"/>
    <property type="molecule type" value="Genomic_DNA"/>
</dbReference>
<dbReference type="RefSeq" id="WP_011723069.1">
    <property type="nucleotide sequence ID" value="NC_008593.1"/>
</dbReference>
<dbReference type="SMR" id="A0Q388"/>
<dbReference type="STRING" id="386415.NT01CX_0624"/>
<dbReference type="KEGG" id="cno:NT01CX_0624"/>
<dbReference type="eggNOG" id="COG0128">
    <property type="taxonomic scope" value="Bacteria"/>
</dbReference>
<dbReference type="HOGENOM" id="CLU_024321_0_0_9"/>
<dbReference type="UniPathway" id="UPA00053">
    <property type="reaction ID" value="UER00089"/>
</dbReference>
<dbReference type="Proteomes" id="UP000008220">
    <property type="component" value="Chromosome"/>
</dbReference>
<dbReference type="GO" id="GO:0005737">
    <property type="term" value="C:cytoplasm"/>
    <property type="evidence" value="ECO:0007669"/>
    <property type="project" value="UniProtKB-SubCell"/>
</dbReference>
<dbReference type="GO" id="GO:0003866">
    <property type="term" value="F:3-phosphoshikimate 1-carboxyvinyltransferase activity"/>
    <property type="evidence" value="ECO:0007669"/>
    <property type="project" value="UniProtKB-UniRule"/>
</dbReference>
<dbReference type="GO" id="GO:0008652">
    <property type="term" value="P:amino acid biosynthetic process"/>
    <property type="evidence" value="ECO:0007669"/>
    <property type="project" value="UniProtKB-KW"/>
</dbReference>
<dbReference type="GO" id="GO:0009073">
    <property type="term" value="P:aromatic amino acid family biosynthetic process"/>
    <property type="evidence" value="ECO:0007669"/>
    <property type="project" value="UniProtKB-KW"/>
</dbReference>
<dbReference type="GO" id="GO:0009423">
    <property type="term" value="P:chorismate biosynthetic process"/>
    <property type="evidence" value="ECO:0007669"/>
    <property type="project" value="UniProtKB-UniRule"/>
</dbReference>
<dbReference type="CDD" id="cd01556">
    <property type="entry name" value="EPSP_synthase"/>
    <property type="match status" value="1"/>
</dbReference>
<dbReference type="Gene3D" id="3.65.10.10">
    <property type="entry name" value="Enolpyruvate transferase domain"/>
    <property type="match status" value="2"/>
</dbReference>
<dbReference type="HAMAP" id="MF_00210">
    <property type="entry name" value="EPSP_synth"/>
    <property type="match status" value="1"/>
</dbReference>
<dbReference type="InterPro" id="IPR001986">
    <property type="entry name" value="Enolpyruvate_Tfrase_dom"/>
</dbReference>
<dbReference type="InterPro" id="IPR036968">
    <property type="entry name" value="Enolpyruvate_Tfrase_sf"/>
</dbReference>
<dbReference type="InterPro" id="IPR006264">
    <property type="entry name" value="EPSP_synthase"/>
</dbReference>
<dbReference type="InterPro" id="IPR023193">
    <property type="entry name" value="EPSP_synthase_CS"/>
</dbReference>
<dbReference type="InterPro" id="IPR013792">
    <property type="entry name" value="RNA3'P_cycl/enolpyr_Trfase_a/b"/>
</dbReference>
<dbReference type="NCBIfam" id="TIGR01356">
    <property type="entry name" value="aroA"/>
    <property type="match status" value="1"/>
</dbReference>
<dbReference type="PANTHER" id="PTHR21090">
    <property type="entry name" value="AROM/DEHYDROQUINATE SYNTHASE"/>
    <property type="match status" value="1"/>
</dbReference>
<dbReference type="PANTHER" id="PTHR21090:SF5">
    <property type="entry name" value="PENTAFUNCTIONAL AROM POLYPEPTIDE"/>
    <property type="match status" value="1"/>
</dbReference>
<dbReference type="Pfam" id="PF00275">
    <property type="entry name" value="EPSP_synthase"/>
    <property type="match status" value="1"/>
</dbReference>
<dbReference type="PIRSF" id="PIRSF000505">
    <property type="entry name" value="EPSPS"/>
    <property type="match status" value="1"/>
</dbReference>
<dbReference type="SUPFAM" id="SSF55205">
    <property type="entry name" value="EPT/RTPC-like"/>
    <property type="match status" value="1"/>
</dbReference>
<dbReference type="PROSITE" id="PS00885">
    <property type="entry name" value="EPSP_SYNTHASE_2"/>
    <property type="match status" value="1"/>
</dbReference>
<protein>
    <recommendedName>
        <fullName evidence="1">3-phosphoshikimate 1-carboxyvinyltransferase</fullName>
        <ecNumber evidence="1">2.5.1.19</ecNumber>
    </recommendedName>
    <alternativeName>
        <fullName evidence="1">5-enolpyruvylshikimate-3-phosphate synthase</fullName>
        <shortName evidence="1">EPSP synthase</shortName>
        <shortName evidence="1">EPSPS</shortName>
    </alternativeName>
</protein>
<comment type="function">
    <text evidence="1">Catalyzes the transfer of the enolpyruvyl moiety of phosphoenolpyruvate (PEP) to the 5-hydroxyl of shikimate-3-phosphate (S3P) to produce enolpyruvyl shikimate-3-phosphate and inorganic phosphate.</text>
</comment>
<comment type="catalytic activity">
    <reaction evidence="1">
        <text>3-phosphoshikimate + phosphoenolpyruvate = 5-O-(1-carboxyvinyl)-3-phosphoshikimate + phosphate</text>
        <dbReference type="Rhea" id="RHEA:21256"/>
        <dbReference type="ChEBI" id="CHEBI:43474"/>
        <dbReference type="ChEBI" id="CHEBI:57701"/>
        <dbReference type="ChEBI" id="CHEBI:58702"/>
        <dbReference type="ChEBI" id="CHEBI:145989"/>
        <dbReference type="EC" id="2.5.1.19"/>
    </reaction>
    <physiologicalReaction direction="left-to-right" evidence="1">
        <dbReference type="Rhea" id="RHEA:21257"/>
    </physiologicalReaction>
</comment>
<comment type="pathway">
    <text evidence="1">Metabolic intermediate biosynthesis; chorismate biosynthesis; chorismate from D-erythrose 4-phosphate and phosphoenolpyruvate: step 6/7.</text>
</comment>
<comment type="subunit">
    <text evidence="1">Monomer.</text>
</comment>
<comment type="subcellular location">
    <subcellularLocation>
        <location evidence="1">Cytoplasm</location>
    </subcellularLocation>
</comment>
<comment type="similarity">
    <text evidence="1">Belongs to the EPSP synthase family.</text>
</comment>
<accession>A0Q388</accession>
<evidence type="ECO:0000255" key="1">
    <source>
        <dbReference type="HAMAP-Rule" id="MF_00210"/>
    </source>
</evidence>
<sequence length="435" mass="48021">MENIKIIPSELNGEINIPPSKSLAHRAIISAGLSEGVSNIENIIFSEDIKATIRGMKSLGIEIEDITNEYKKGSERSTLKVIGKEKLTLENDTIDCSESGSTLRFLIPIALRAEKEVTFTGRGKLVSRPLDVYYNIFENQGIKYKTSNNELPLTVDGKINPGEFHVKGNVSSQFITGLMYTLPFLDGDSKIIITTELESKGYVDLTIDTLKKFGVEIENNNYKEFIIKGNQKSTSRDYRVQGDFSQGAFFIVAGILGSNVKTLDLDIDSLQGDKAIIDIVKKMGANIKVGRDYIETKKSKTHGITIDASECPDLVPILAVLGAVSHGTTKIINAERLRIKECDRLKAMATELSKIGADIKELEDGLIIKGKYKLKGGVVDSWNDHRIAMAMAIASIKCTEPVIIQNSMAVNKSYPDFWKDFEKVGGIIDEWSMGK</sequence>
<reference key="1">
    <citation type="journal article" date="2006" name="Nat. Biotechnol.">
        <title>The genome and transcriptomes of the anti-tumor agent Clostridium novyi-NT.</title>
        <authorList>
            <person name="Bettegowda C."/>
            <person name="Huang X."/>
            <person name="Lin J."/>
            <person name="Cheong I."/>
            <person name="Kohli M."/>
            <person name="Szabo S.A."/>
            <person name="Zhang X."/>
            <person name="Diaz L.A. Jr."/>
            <person name="Velculescu V.E."/>
            <person name="Parmigiani G."/>
            <person name="Kinzler K.W."/>
            <person name="Vogelstein B."/>
            <person name="Zhou S."/>
        </authorList>
    </citation>
    <scope>NUCLEOTIDE SEQUENCE [LARGE SCALE GENOMIC DNA]</scope>
    <source>
        <strain>NT</strain>
    </source>
</reference>
<organism>
    <name type="scientific">Clostridium novyi (strain NT)</name>
    <dbReference type="NCBI Taxonomy" id="386415"/>
    <lineage>
        <taxon>Bacteria</taxon>
        <taxon>Bacillati</taxon>
        <taxon>Bacillota</taxon>
        <taxon>Clostridia</taxon>
        <taxon>Eubacteriales</taxon>
        <taxon>Clostridiaceae</taxon>
        <taxon>Clostridium</taxon>
    </lineage>
</organism>